<proteinExistence type="inferred from homology"/>
<sequence length="333" mass="37772">MTNTAKILNFGRGNFAGQERNVADLDDGYARLSNMLLEAYSGADLTKRQFKVLLAILRKTYGWNKPMDRITDSQLSEITKLPVKRCNEAKLELVRMNIIKQQGGMFGPNKNISEWCIPQNEGKSPKTRDKTSLKLGDCYPSKQGDTKDTITKEKRKDYSSENSGESSDQPENDLSVVKPDAAIQSGSKWGTAEDLTAAEWMFDMVKTIAPSARKPNFAGWANDIRLMRERDGRNHRDMCVLFRWACQDNFWSGNVLSPAKLRDKWTQLEINRNKQQAGVTASKPKLDLTNTDWIYGVDLKTSPHRWLTLTVSRCVGSPTTCRNSTTKSRRYSR</sequence>
<keyword id="KW-0235">DNA replication</keyword>
<keyword id="KW-0238">DNA-binding</keyword>
<keyword id="KW-1185">Reference proteome</keyword>
<reference key="1">
    <citation type="journal article" date="1982" name="J. Mol. Biol.">
        <title>Nucleotide sequence of bacteriophage lambda DNA.</title>
        <authorList>
            <person name="Sanger F."/>
            <person name="Coulson A.R."/>
            <person name="Hong G.F."/>
            <person name="Hill D.F."/>
            <person name="Petersen G.B."/>
        </authorList>
    </citation>
    <scope>NUCLEOTIDE SEQUENCE [LARGE SCALE GENOMIC DNA]</scope>
</reference>
<reference key="2">
    <citation type="journal article" date="1978" name="Nucleic Acids Res.">
        <title>Nucleotide sequence of the O gene and of the origin of replication in bacteriophage lambda DNA.</title>
        <authorList>
            <person name="Scherer G."/>
        </authorList>
    </citation>
    <scope>NUCLEOTIDE SEQUENCE [GENOMIC DNA]</scope>
</reference>
<reference key="3">
    <citation type="journal article" date="1979" name="Gene">
        <title>Primary structure of an EcoRI fragment of lambda imm434 DNA containing regions cI-cro of phage 434 and cII-o of phage lambda.</title>
        <authorList>
            <person name="Ovchinnikov Y.A."/>
            <person name="Guryev S.O."/>
            <person name="Krayev A.S."/>
            <person name="Monastyrskaya G.S."/>
            <person name="Skryabin K.G."/>
            <person name="Sverdlov E.D."/>
            <person name="Zakharyev V.M."/>
            <person name="Bayev A.A."/>
        </authorList>
    </citation>
    <scope>NUCLEOTIDE SEQUENCE [GENOMIC DNA] OF 1-162</scope>
</reference>
<reference key="4">
    <citation type="journal article" date="1978" name="Nature">
        <title>Nucleotide sequence of cro, cII and part of the O gene in phage lambda DNA.</title>
        <authorList>
            <person name="Schwarz E."/>
            <person name="Scherer G."/>
            <person name="Hobom G."/>
            <person name="Koessel H."/>
        </authorList>
    </citation>
    <scope>NUCLEOTIDE SEQUENCE [GENOMIC DNA] OF 1-99</scope>
</reference>
<dbReference type="EMBL" id="J02459">
    <property type="protein sequence ID" value="AAA96584.1"/>
    <property type="status" value="ALT_TERM"/>
    <property type="molecule type" value="Genomic_DNA"/>
</dbReference>
<dbReference type="EMBL" id="J02460">
    <property type="protein sequence ID" value="AAA32247.1"/>
    <property type="molecule type" value="Genomic_DNA"/>
</dbReference>
<dbReference type="PIR" id="F94614">
    <property type="entry name" value="ORBPL"/>
</dbReference>
<dbReference type="RefSeq" id="NP_040631.1">
    <property type="nucleotide sequence ID" value="NC_001416.1"/>
</dbReference>
<dbReference type="SMR" id="P03688"/>
<dbReference type="IntAct" id="P03688">
    <property type="interactions" value="1"/>
</dbReference>
<dbReference type="KEGG" id="vg:3827060"/>
<dbReference type="Proteomes" id="UP000001711">
    <property type="component" value="Genome"/>
</dbReference>
<dbReference type="GO" id="GO:0003677">
    <property type="term" value="F:DNA binding"/>
    <property type="evidence" value="ECO:0000314"/>
    <property type="project" value="UniProtKB"/>
</dbReference>
<dbReference type="GO" id="GO:0039686">
    <property type="term" value="P:bidirectional double-stranded viral DNA replication"/>
    <property type="evidence" value="ECO:0000314"/>
    <property type="project" value="UniProtKB"/>
</dbReference>
<dbReference type="GO" id="GO:0006260">
    <property type="term" value="P:DNA replication"/>
    <property type="evidence" value="ECO:0007669"/>
    <property type="project" value="UniProtKB-KW"/>
</dbReference>
<dbReference type="FunFam" id="1.10.10.10:FF:000345">
    <property type="entry name" value="Replication protein O"/>
    <property type="match status" value="1"/>
</dbReference>
<dbReference type="Gene3D" id="1.10.10.10">
    <property type="entry name" value="Winged helix-like DNA-binding domain superfamily/Winged helix DNA-binding domain"/>
    <property type="match status" value="1"/>
</dbReference>
<dbReference type="InterPro" id="IPR006497">
    <property type="entry name" value="Phage_lambda_VrpO_N"/>
</dbReference>
<dbReference type="InterPro" id="IPR036388">
    <property type="entry name" value="WH-like_DNA-bd_sf"/>
</dbReference>
<dbReference type="NCBIfam" id="TIGR01610">
    <property type="entry name" value="phage_O_Nterm"/>
    <property type="match status" value="1"/>
</dbReference>
<dbReference type="Pfam" id="PF04492">
    <property type="entry name" value="Phage_rep_O"/>
    <property type="match status" value="1"/>
</dbReference>
<name>VRPO_LAMBD</name>
<accession>P03688</accession>
<comment type="function">
    <text>Necessary for the bidirectional replication of DNA. It interacts with the ori (origin of replication) region of the genome during the initiation of replication.</text>
</comment>
<comment type="similarity">
    <text evidence="2">Belongs to the phage O protein family.</text>
</comment>
<comment type="caution">
    <text evidence="2">The amino end of replication protein O may be as shown or may begin at residue 22. There is a UGA terminator after residue 299. In vitro, this terminator codon is skipped and read-through occurs. It is not known whether read-through occurs in vivo.</text>
</comment>
<evidence type="ECO:0000256" key="1">
    <source>
        <dbReference type="SAM" id="MobiDB-lite"/>
    </source>
</evidence>
<evidence type="ECO:0000305" key="2"/>
<gene>
    <name type="primary">O</name>
</gene>
<organism>
    <name type="scientific">Escherichia phage lambda</name>
    <name type="common">Bacteriophage lambda</name>
    <dbReference type="NCBI Taxonomy" id="2681611"/>
    <lineage>
        <taxon>Viruses</taxon>
        <taxon>Duplodnaviria</taxon>
        <taxon>Heunggongvirae</taxon>
        <taxon>Uroviricota</taxon>
        <taxon>Caudoviricetes</taxon>
        <taxon>Lambdavirus</taxon>
        <taxon>Lambdavirus lambda</taxon>
    </lineage>
</organism>
<organismHost>
    <name type="scientific">Escherichia coli</name>
    <dbReference type="NCBI Taxonomy" id="562"/>
</organismHost>
<feature type="chain" id="PRO_0000077702" description="Replication protein O">
    <location>
        <begin position="1"/>
        <end position="333"/>
    </location>
</feature>
<feature type="region of interest" description="Disordered" evidence="1">
    <location>
        <begin position="117"/>
        <end position="181"/>
    </location>
</feature>
<feature type="compositionally biased region" description="Basic and acidic residues" evidence="1">
    <location>
        <begin position="123"/>
        <end position="132"/>
    </location>
</feature>
<feature type="compositionally biased region" description="Basic and acidic residues" evidence="1">
    <location>
        <begin position="144"/>
        <end position="159"/>
    </location>
</feature>
<feature type="compositionally biased region" description="Polar residues" evidence="1">
    <location>
        <begin position="160"/>
        <end position="169"/>
    </location>
</feature>
<protein>
    <recommendedName>
        <fullName>Replication protein O</fullName>
    </recommendedName>
</protein>